<geneLocation type="mitochondrion"/>
<accession>Q9GBZ1</accession>
<reference key="1">
    <citation type="journal article" date="2000" name="Mol. Phylogenet. Evol.">
        <title>Molecular systematics of pikas (genus Ochotona) inferred from mitochondrial DNA sequences.</title>
        <authorList>
            <person name="Yu N."/>
            <person name="Zheng C."/>
            <person name="Zhang Y.P."/>
            <person name="Li W.H."/>
        </authorList>
    </citation>
    <scope>NUCLEOTIDE SEQUENCE [GENOMIC DNA]</scope>
</reference>
<name>CYB_OCHLA</name>
<keyword id="KW-0249">Electron transport</keyword>
<keyword id="KW-0349">Heme</keyword>
<keyword id="KW-0408">Iron</keyword>
<keyword id="KW-0472">Membrane</keyword>
<keyword id="KW-0479">Metal-binding</keyword>
<keyword id="KW-0496">Mitochondrion</keyword>
<keyword id="KW-0999">Mitochondrion inner membrane</keyword>
<keyword id="KW-0679">Respiratory chain</keyword>
<keyword id="KW-0812">Transmembrane</keyword>
<keyword id="KW-1133">Transmembrane helix</keyword>
<keyword id="KW-0813">Transport</keyword>
<keyword id="KW-0830">Ubiquinone</keyword>
<feature type="chain" id="PRO_0000061304" description="Cytochrome b">
    <location>
        <begin position="1"/>
        <end position="379"/>
    </location>
</feature>
<feature type="transmembrane region" description="Helical" evidence="2">
    <location>
        <begin position="33"/>
        <end position="53"/>
    </location>
</feature>
<feature type="transmembrane region" description="Helical" evidence="2">
    <location>
        <begin position="77"/>
        <end position="98"/>
    </location>
</feature>
<feature type="transmembrane region" description="Helical" evidence="2">
    <location>
        <begin position="113"/>
        <end position="133"/>
    </location>
</feature>
<feature type="transmembrane region" description="Helical" evidence="2">
    <location>
        <begin position="178"/>
        <end position="198"/>
    </location>
</feature>
<feature type="transmembrane region" description="Helical" evidence="2">
    <location>
        <begin position="226"/>
        <end position="246"/>
    </location>
</feature>
<feature type="transmembrane region" description="Helical" evidence="2">
    <location>
        <begin position="288"/>
        <end position="308"/>
    </location>
</feature>
<feature type="transmembrane region" description="Helical" evidence="2">
    <location>
        <begin position="320"/>
        <end position="340"/>
    </location>
</feature>
<feature type="transmembrane region" description="Helical" evidence="2">
    <location>
        <begin position="347"/>
        <end position="367"/>
    </location>
</feature>
<feature type="binding site" description="axial binding residue" evidence="2">
    <location>
        <position position="83"/>
    </location>
    <ligand>
        <name>heme b</name>
        <dbReference type="ChEBI" id="CHEBI:60344"/>
        <label>b562</label>
    </ligand>
    <ligandPart>
        <name>Fe</name>
        <dbReference type="ChEBI" id="CHEBI:18248"/>
    </ligandPart>
</feature>
<feature type="binding site" description="axial binding residue" evidence="2">
    <location>
        <position position="97"/>
    </location>
    <ligand>
        <name>heme b</name>
        <dbReference type="ChEBI" id="CHEBI:60344"/>
        <label>b566</label>
    </ligand>
    <ligandPart>
        <name>Fe</name>
        <dbReference type="ChEBI" id="CHEBI:18248"/>
    </ligandPart>
</feature>
<feature type="binding site" description="axial binding residue" evidence="2">
    <location>
        <position position="182"/>
    </location>
    <ligand>
        <name>heme b</name>
        <dbReference type="ChEBI" id="CHEBI:60344"/>
        <label>b562</label>
    </ligand>
    <ligandPart>
        <name>Fe</name>
        <dbReference type="ChEBI" id="CHEBI:18248"/>
    </ligandPart>
</feature>
<feature type="binding site" description="axial binding residue" evidence="2">
    <location>
        <position position="196"/>
    </location>
    <ligand>
        <name>heme b</name>
        <dbReference type="ChEBI" id="CHEBI:60344"/>
        <label>b566</label>
    </ligand>
    <ligandPart>
        <name>Fe</name>
        <dbReference type="ChEBI" id="CHEBI:18248"/>
    </ligandPart>
</feature>
<feature type="binding site" evidence="2">
    <location>
        <position position="201"/>
    </location>
    <ligand>
        <name>a ubiquinone</name>
        <dbReference type="ChEBI" id="CHEBI:16389"/>
    </ligand>
</feature>
<comment type="function">
    <text evidence="2">Component of the ubiquinol-cytochrome c reductase complex (complex III or cytochrome b-c1 complex) that is part of the mitochondrial respiratory chain. The b-c1 complex mediates electron transfer from ubiquinol to cytochrome c. Contributes to the generation of a proton gradient across the mitochondrial membrane that is then used for ATP synthesis.</text>
</comment>
<comment type="cofactor">
    <cofactor evidence="2">
        <name>heme b</name>
        <dbReference type="ChEBI" id="CHEBI:60344"/>
    </cofactor>
    <text evidence="2">Binds 2 heme b groups non-covalently.</text>
</comment>
<comment type="subunit">
    <text evidence="2">The cytochrome bc1 complex contains 11 subunits: 3 respiratory subunits (MT-CYB, CYC1 and UQCRFS1), 2 core proteins (UQCRC1 and UQCRC2) and 6 low-molecular weight proteins (UQCRH/QCR6, UQCRB/QCR7, UQCRQ/QCR8, UQCR10/QCR9, UQCR11/QCR10 and a cleavage product of UQCRFS1). This cytochrome bc1 complex then forms a dimer.</text>
</comment>
<comment type="subcellular location">
    <subcellularLocation>
        <location evidence="2">Mitochondrion inner membrane</location>
        <topology evidence="2">Multi-pass membrane protein</topology>
    </subcellularLocation>
</comment>
<comment type="miscellaneous">
    <text evidence="1">Heme 1 (or BL or b562) is low-potential and absorbs at about 562 nm, and heme 2 (or BH or b566) is high-potential and absorbs at about 566 nm.</text>
</comment>
<comment type="similarity">
    <text evidence="3 4">Belongs to the cytochrome b family.</text>
</comment>
<comment type="caution">
    <text evidence="2">The full-length protein contains only eight transmembrane helices, not nine as predicted by bioinformatics tools.</text>
</comment>
<gene>
    <name type="primary">MT-CYB</name>
    <name type="synonym">COB</name>
    <name type="synonym">CYTB</name>
    <name type="synonym">MTCYB</name>
</gene>
<dbReference type="EMBL" id="AF272992">
    <property type="protein sequence ID" value="AAG00187.1"/>
    <property type="molecule type" value="Genomic_DNA"/>
</dbReference>
<dbReference type="SMR" id="Q9GBZ1"/>
<dbReference type="GO" id="GO:0005743">
    <property type="term" value="C:mitochondrial inner membrane"/>
    <property type="evidence" value="ECO:0007669"/>
    <property type="project" value="UniProtKB-SubCell"/>
</dbReference>
<dbReference type="GO" id="GO:0045275">
    <property type="term" value="C:respiratory chain complex III"/>
    <property type="evidence" value="ECO:0007669"/>
    <property type="project" value="InterPro"/>
</dbReference>
<dbReference type="GO" id="GO:0046872">
    <property type="term" value="F:metal ion binding"/>
    <property type="evidence" value="ECO:0007669"/>
    <property type="project" value="UniProtKB-KW"/>
</dbReference>
<dbReference type="GO" id="GO:0008121">
    <property type="term" value="F:ubiquinol-cytochrome-c reductase activity"/>
    <property type="evidence" value="ECO:0007669"/>
    <property type="project" value="InterPro"/>
</dbReference>
<dbReference type="GO" id="GO:0006122">
    <property type="term" value="P:mitochondrial electron transport, ubiquinol to cytochrome c"/>
    <property type="evidence" value="ECO:0007669"/>
    <property type="project" value="TreeGrafter"/>
</dbReference>
<dbReference type="CDD" id="cd00290">
    <property type="entry name" value="cytochrome_b_C"/>
    <property type="match status" value="1"/>
</dbReference>
<dbReference type="CDD" id="cd00284">
    <property type="entry name" value="Cytochrome_b_N"/>
    <property type="match status" value="1"/>
</dbReference>
<dbReference type="FunFam" id="1.20.810.10:FF:000002">
    <property type="entry name" value="Cytochrome b"/>
    <property type="match status" value="1"/>
</dbReference>
<dbReference type="Gene3D" id="1.20.810.10">
    <property type="entry name" value="Cytochrome Bc1 Complex, Chain C"/>
    <property type="match status" value="1"/>
</dbReference>
<dbReference type="InterPro" id="IPR005798">
    <property type="entry name" value="Cyt_b/b6_C"/>
</dbReference>
<dbReference type="InterPro" id="IPR036150">
    <property type="entry name" value="Cyt_b/b6_C_sf"/>
</dbReference>
<dbReference type="InterPro" id="IPR005797">
    <property type="entry name" value="Cyt_b/b6_N"/>
</dbReference>
<dbReference type="InterPro" id="IPR027387">
    <property type="entry name" value="Cytb/b6-like_sf"/>
</dbReference>
<dbReference type="InterPro" id="IPR030689">
    <property type="entry name" value="Cytochrome_b"/>
</dbReference>
<dbReference type="InterPro" id="IPR048260">
    <property type="entry name" value="Cytochrome_b_C_euk/bac"/>
</dbReference>
<dbReference type="InterPro" id="IPR048259">
    <property type="entry name" value="Cytochrome_b_N_euk/bac"/>
</dbReference>
<dbReference type="InterPro" id="IPR016174">
    <property type="entry name" value="Di-haem_cyt_TM"/>
</dbReference>
<dbReference type="PANTHER" id="PTHR19271">
    <property type="entry name" value="CYTOCHROME B"/>
    <property type="match status" value="1"/>
</dbReference>
<dbReference type="PANTHER" id="PTHR19271:SF16">
    <property type="entry name" value="CYTOCHROME B"/>
    <property type="match status" value="1"/>
</dbReference>
<dbReference type="Pfam" id="PF00032">
    <property type="entry name" value="Cytochrom_B_C"/>
    <property type="match status" value="1"/>
</dbReference>
<dbReference type="Pfam" id="PF00033">
    <property type="entry name" value="Cytochrome_B"/>
    <property type="match status" value="1"/>
</dbReference>
<dbReference type="PIRSF" id="PIRSF038885">
    <property type="entry name" value="COB"/>
    <property type="match status" value="1"/>
</dbReference>
<dbReference type="SUPFAM" id="SSF81648">
    <property type="entry name" value="a domain/subunit of cytochrome bc1 complex (Ubiquinol-cytochrome c reductase)"/>
    <property type="match status" value="1"/>
</dbReference>
<dbReference type="SUPFAM" id="SSF81342">
    <property type="entry name" value="Transmembrane di-heme cytochromes"/>
    <property type="match status" value="1"/>
</dbReference>
<dbReference type="PROSITE" id="PS51003">
    <property type="entry name" value="CYTB_CTER"/>
    <property type="match status" value="1"/>
</dbReference>
<dbReference type="PROSITE" id="PS51002">
    <property type="entry name" value="CYTB_NTER"/>
    <property type="match status" value="1"/>
</dbReference>
<evidence type="ECO:0000250" key="1"/>
<evidence type="ECO:0000250" key="2">
    <source>
        <dbReference type="UniProtKB" id="P00157"/>
    </source>
</evidence>
<evidence type="ECO:0000255" key="3">
    <source>
        <dbReference type="PROSITE-ProRule" id="PRU00967"/>
    </source>
</evidence>
<evidence type="ECO:0000255" key="4">
    <source>
        <dbReference type="PROSITE-ProRule" id="PRU00968"/>
    </source>
</evidence>
<proteinExistence type="inferred from homology"/>
<protein>
    <recommendedName>
        <fullName>Cytochrome b</fullName>
    </recommendedName>
    <alternativeName>
        <fullName>Complex III subunit 3</fullName>
    </alternativeName>
    <alternativeName>
        <fullName>Complex III subunit III</fullName>
    </alternativeName>
    <alternativeName>
        <fullName>Cytochrome b-c1 complex subunit 3</fullName>
    </alternativeName>
    <alternativeName>
        <fullName>Ubiquinol-cytochrome-c reductase complex cytochrome b subunit</fullName>
    </alternativeName>
</protein>
<sequence>MTNIRKTHPLMKIINHSLIDLPAPSNISAWWNFGSLLGLCLGIQIITGLFLAMHYTSDTLTAFSSVTHICRDVNYGWIIRYMHANGASMFFICLFLHVGRGIYYGSYTYSETWNIGILLLFAVMATAFMGYVLPWGQMSFWGATVITNLLSAIPYIGTDLVQWIWGGFSVDKATLTRFFAFHFILPFIIAALVMVHLLFLHETGSNNPTGIISDADKIPFHPYYTIKDALGFLLLISLLLTLVLFSPDLLGDPDNYTPANPLNTPPHIKPEWYFLFAYAILRSIPNKLGGVLALVLSIAILAVLPLLHTSKQRSMMFRPISQTLFWILVADLFTLTWIGGQPVEHPFIIIGQLASFLYFFLILILMPTSSLIENKLLKW</sequence>
<organism>
    <name type="scientific">Ochotona ladacensis</name>
    <name type="common">Ladak pika</name>
    <dbReference type="NCBI Taxonomy" id="130836"/>
    <lineage>
        <taxon>Eukaryota</taxon>
        <taxon>Metazoa</taxon>
        <taxon>Chordata</taxon>
        <taxon>Craniata</taxon>
        <taxon>Vertebrata</taxon>
        <taxon>Euteleostomi</taxon>
        <taxon>Mammalia</taxon>
        <taxon>Eutheria</taxon>
        <taxon>Euarchontoglires</taxon>
        <taxon>Glires</taxon>
        <taxon>Lagomorpha</taxon>
        <taxon>Ochotonidae</taxon>
        <taxon>Ochotona</taxon>
    </lineage>
</organism>